<keyword id="KW-0963">Cytoplasm</keyword>
<keyword id="KW-0648">Protein biosynthesis</keyword>
<dbReference type="EMBL" id="CP000061">
    <property type="protein sequence ID" value="ABC65668.1"/>
    <property type="molecule type" value="Genomic_DNA"/>
</dbReference>
<dbReference type="RefSeq" id="WP_011412830.1">
    <property type="nucleotide sequence ID" value="NC_007716.1"/>
</dbReference>
<dbReference type="SMR" id="Q2NIS5"/>
<dbReference type="STRING" id="322098.AYWB_551"/>
<dbReference type="KEGG" id="ayw:AYWB_551"/>
<dbReference type="eggNOG" id="COG0233">
    <property type="taxonomic scope" value="Bacteria"/>
</dbReference>
<dbReference type="HOGENOM" id="CLU_073981_2_0_14"/>
<dbReference type="OrthoDB" id="9804006at2"/>
<dbReference type="PhylomeDB" id="Q2NIS5"/>
<dbReference type="Proteomes" id="UP000001934">
    <property type="component" value="Chromosome"/>
</dbReference>
<dbReference type="GO" id="GO:0005737">
    <property type="term" value="C:cytoplasm"/>
    <property type="evidence" value="ECO:0007669"/>
    <property type="project" value="UniProtKB-SubCell"/>
</dbReference>
<dbReference type="GO" id="GO:0043023">
    <property type="term" value="F:ribosomal large subunit binding"/>
    <property type="evidence" value="ECO:0007669"/>
    <property type="project" value="TreeGrafter"/>
</dbReference>
<dbReference type="GO" id="GO:0006415">
    <property type="term" value="P:translational termination"/>
    <property type="evidence" value="ECO:0007669"/>
    <property type="project" value="UniProtKB-UniRule"/>
</dbReference>
<dbReference type="FunFam" id="3.30.1360.40:FF:000001">
    <property type="entry name" value="Ribosome-recycling factor"/>
    <property type="match status" value="1"/>
</dbReference>
<dbReference type="Gene3D" id="3.30.1360.40">
    <property type="match status" value="1"/>
</dbReference>
<dbReference type="Gene3D" id="1.10.132.20">
    <property type="entry name" value="Ribosome-recycling factor"/>
    <property type="match status" value="1"/>
</dbReference>
<dbReference type="HAMAP" id="MF_00040">
    <property type="entry name" value="RRF"/>
    <property type="match status" value="1"/>
</dbReference>
<dbReference type="InterPro" id="IPR002661">
    <property type="entry name" value="Ribosome_recyc_fac"/>
</dbReference>
<dbReference type="InterPro" id="IPR023584">
    <property type="entry name" value="Ribosome_recyc_fac_dom"/>
</dbReference>
<dbReference type="InterPro" id="IPR036191">
    <property type="entry name" value="RRF_sf"/>
</dbReference>
<dbReference type="NCBIfam" id="TIGR00496">
    <property type="entry name" value="frr"/>
    <property type="match status" value="1"/>
</dbReference>
<dbReference type="PANTHER" id="PTHR20982:SF3">
    <property type="entry name" value="MITOCHONDRIAL RIBOSOME RECYCLING FACTOR PSEUDO 1"/>
    <property type="match status" value="1"/>
</dbReference>
<dbReference type="PANTHER" id="PTHR20982">
    <property type="entry name" value="RIBOSOME RECYCLING FACTOR"/>
    <property type="match status" value="1"/>
</dbReference>
<dbReference type="Pfam" id="PF01765">
    <property type="entry name" value="RRF"/>
    <property type="match status" value="1"/>
</dbReference>
<dbReference type="SUPFAM" id="SSF55194">
    <property type="entry name" value="Ribosome recycling factor, RRF"/>
    <property type="match status" value="1"/>
</dbReference>
<evidence type="ECO:0000255" key="1">
    <source>
        <dbReference type="HAMAP-Rule" id="MF_00040"/>
    </source>
</evidence>
<name>RRF_AYWBP</name>
<proteinExistence type="inferred from homology"/>
<sequence length="184" mass="20811">MQQFAKDILASLEIKMTQAQELMLKNFCDIRTGTANPNILDKITVNYYGATTFLKTLASISVSEGNQINIKPYDSNLIPNIKKVLLASNLGITPQTDGVVVRLVFPKPTEERRKALMKEVEQLSEKTKVAIRNVRREGNDKIKKVELTKDLETFYLNQIQTLTDKNIKLIDKQTATKNIELSKA</sequence>
<accession>Q2NIS5</accession>
<feature type="chain" id="PRO_1000003103" description="Ribosome-recycling factor">
    <location>
        <begin position="1"/>
        <end position="184"/>
    </location>
</feature>
<gene>
    <name evidence="1" type="primary">frr</name>
    <name type="ordered locus">AYWB_551</name>
</gene>
<comment type="function">
    <text evidence="1">Responsible for the release of ribosomes from messenger RNA at the termination of protein biosynthesis. May increase the efficiency of translation by recycling ribosomes from one round of translation to another.</text>
</comment>
<comment type="subcellular location">
    <subcellularLocation>
        <location evidence="1">Cytoplasm</location>
    </subcellularLocation>
</comment>
<comment type="similarity">
    <text evidence="1">Belongs to the RRF family.</text>
</comment>
<reference key="1">
    <citation type="journal article" date="2006" name="J. Bacteriol.">
        <title>Living with genome instability: the adaptation of phytoplasmas to diverse environments of their insect and plant hosts.</title>
        <authorList>
            <person name="Bai X."/>
            <person name="Zhang J."/>
            <person name="Ewing A."/>
            <person name="Miller S.A."/>
            <person name="Jancso Radek A."/>
            <person name="Shevchenko D.V."/>
            <person name="Tsukerman K."/>
            <person name="Walunas T."/>
            <person name="Lapidus A."/>
            <person name="Campbell J.W."/>
            <person name="Hogenhout S.A."/>
        </authorList>
    </citation>
    <scope>NUCLEOTIDE SEQUENCE [LARGE SCALE GENOMIC DNA]</scope>
    <source>
        <strain>AYWB</strain>
    </source>
</reference>
<organism>
    <name type="scientific">Aster yellows witches'-broom phytoplasma (strain AYWB)</name>
    <dbReference type="NCBI Taxonomy" id="322098"/>
    <lineage>
        <taxon>Bacteria</taxon>
        <taxon>Bacillati</taxon>
        <taxon>Mycoplasmatota</taxon>
        <taxon>Mollicutes</taxon>
        <taxon>Acholeplasmatales</taxon>
        <taxon>Acholeplasmataceae</taxon>
        <taxon>Candidatus Phytoplasma</taxon>
        <taxon>16SrI (Aster yellows group)</taxon>
    </lineage>
</organism>
<protein>
    <recommendedName>
        <fullName evidence="1">Ribosome-recycling factor</fullName>
        <shortName evidence="1">RRF</shortName>
    </recommendedName>
    <alternativeName>
        <fullName evidence="1">Ribosome-releasing factor</fullName>
    </alternativeName>
</protein>